<comment type="similarity">
    <text evidence="1">Belongs to the UPF0288 family.</text>
</comment>
<dbReference type="EMBL" id="CP000099">
    <property type="protein sequence ID" value="AAZ69684.1"/>
    <property type="molecule type" value="Genomic_DNA"/>
</dbReference>
<dbReference type="SMR" id="Q46EK8"/>
<dbReference type="STRING" id="269797.Mbar_A0706"/>
<dbReference type="PaxDb" id="269797-Mbar_A0706"/>
<dbReference type="KEGG" id="mba:Mbar_A0706"/>
<dbReference type="eggNOG" id="arCOG04900">
    <property type="taxonomic scope" value="Archaea"/>
</dbReference>
<dbReference type="HOGENOM" id="CLU_533841_0_0_2"/>
<dbReference type="OrthoDB" id="140355at2157"/>
<dbReference type="HAMAP" id="MF_01089">
    <property type="entry name" value="UPF0288"/>
    <property type="match status" value="1"/>
</dbReference>
<dbReference type="InterPro" id="IPR016466">
    <property type="entry name" value="Methan_mark_3"/>
</dbReference>
<dbReference type="NCBIfam" id="TIGR03268">
    <property type="entry name" value="methan_mark_3"/>
    <property type="match status" value="1"/>
</dbReference>
<dbReference type="PIRSF" id="PIRSF005852">
    <property type="entry name" value="UCP005852"/>
    <property type="match status" value="1"/>
</dbReference>
<accession>Q46EK8</accession>
<evidence type="ECO:0000255" key="1">
    <source>
        <dbReference type="HAMAP-Rule" id="MF_01089"/>
    </source>
</evidence>
<name>Y706_METBF</name>
<reference key="1">
    <citation type="journal article" date="2006" name="J. Bacteriol.">
        <title>The Methanosarcina barkeri genome: comparative analysis with Methanosarcina acetivorans and Methanosarcina mazei reveals extensive rearrangement within methanosarcinal genomes.</title>
        <authorList>
            <person name="Maeder D.L."/>
            <person name="Anderson I."/>
            <person name="Brettin T.S."/>
            <person name="Bruce D.C."/>
            <person name="Gilna P."/>
            <person name="Han C.S."/>
            <person name="Lapidus A."/>
            <person name="Metcalf W.W."/>
            <person name="Saunders E."/>
            <person name="Tapia R."/>
            <person name="Sowers K.R."/>
        </authorList>
    </citation>
    <scope>NUCLEOTIDE SEQUENCE [LARGE SCALE GENOMIC DNA]</scope>
    <source>
        <strain>Fusaro / DSM 804</strain>
    </source>
</reference>
<feature type="chain" id="PRO_1000149883" description="UPF0288 protein Mbar_A0706">
    <location>
        <begin position="1"/>
        <end position="518"/>
    </location>
</feature>
<proteinExistence type="inferred from homology"/>
<protein>
    <recommendedName>
        <fullName evidence="1">UPF0288 protein Mbar_A0706</fullName>
    </recommendedName>
</protein>
<sequence>MPITSNEISVEVNGQQYTLPAGSTLGDALKVSRAPYIAGTAVGILKEVAEEKIEIVTEYAINTPRGEFRIEINNPESPSGKLWAEHFKEYEGKSIHWASPEALAFGPFEAEIKPSRETGSFEAFEVMFGAGGFDPHNTHLIFSLKRHTAEYGTPEDGVFAEVVTGRKILSRLSREDTILGIEPIIEWEQISEKNCTTDLSVPLEDGNSIFTYFEVELSRNAPKGAEHFYALTREGTLNVDVTTSSFISDDGLKGVTAPYENFEPRREGAISVRTVGYGLGRIYISREERPSSLVHSVVGQVTKGIELIKLAEEGQKLSVESLPPQIVLLGHSFEEAGLVLSSIGVELIKDGYTGEDAVIVSQDPPTTLEILGEAKVTAYAVPRDKLIEIELYPEKAPKSVDFFRHGLELKTKTVGKLPVYMIYDDTYLFKTEKEVVKYKEILPENTPTDKVLGGEIGITNQAAKRMGTIGVRLGDDELFGPTGERFSSTNIVGRIINPEKLLAVKEGDVIYVTEIVRK</sequence>
<organism>
    <name type="scientific">Methanosarcina barkeri (strain Fusaro / DSM 804)</name>
    <dbReference type="NCBI Taxonomy" id="269797"/>
    <lineage>
        <taxon>Archaea</taxon>
        <taxon>Methanobacteriati</taxon>
        <taxon>Methanobacteriota</taxon>
        <taxon>Stenosarchaea group</taxon>
        <taxon>Methanomicrobia</taxon>
        <taxon>Methanosarcinales</taxon>
        <taxon>Methanosarcinaceae</taxon>
        <taxon>Methanosarcina</taxon>
    </lineage>
</organism>
<gene>
    <name type="ordered locus">Mbar_A0706</name>
</gene>